<evidence type="ECO:0000255" key="1">
    <source>
        <dbReference type="HAMAP-Rule" id="MF_00249"/>
    </source>
</evidence>
<dbReference type="EMBL" id="CT573326">
    <property type="protein sequence ID" value="CAK17697.1"/>
    <property type="molecule type" value="Genomic_DNA"/>
</dbReference>
<dbReference type="RefSeq" id="WP_011536057.1">
    <property type="nucleotide sequence ID" value="NC_008027.1"/>
</dbReference>
<dbReference type="SMR" id="Q1I3T9"/>
<dbReference type="STRING" id="384676.PSEEN5064"/>
<dbReference type="GeneID" id="32808002"/>
<dbReference type="KEGG" id="pen:PSEEN5064"/>
<dbReference type="eggNOG" id="COG1220">
    <property type="taxonomic scope" value="Bacteria"/>
</dbReference>
<dbReference type="HOGENOM" id="CLU_033123_0_0_6"/>
<dbReference type="OrthoDB" id="9804062at2"/>
<dbReference type="Proteomes" id="UP000000658">
    <property type="component" value="Chromosome"/>
</dbReference>
<dbReference type="GO" id="GO:0009376">
    <property type="term" value="C:HslUV protease complex"/>
    <property type="evidence" value="ECO:0007669"/>
    <property type="project" value="UniProtKB-UniRule"/>
</dbReference>
<dbReference type="GO" id="GO:0005524">
    <property type="term" value="F:ATP binding"/>
    <property type="evidence" value="ECO:0007669"/>
    <property type="project" value="UniProtKB-UniRule"/>
</dbReference>
<dbReference type="GO" id="GO:0016887">
    <property type="term" value="F:ATP hydrolysis activity"/>
    <property type="evidence" value="ECO:0007669"/>
    <property type="project" value="InterPro"/>
</dbReference>
<dbReference type="GO" id="GO:0008233">
    <property type="term" value="F:peptidase activity"/>
    <property type="evidence" value="ECO:0007669"/>
    <property type="project" value="InterPro"/>
</dbReference>
<dbReference type="GO" id="GO:0036402">
    <property type="term" value="F:proteasome-activating activity"/>
    <property type="evidence" value="ECO:0007669"/>
    <property type="project" value="UniProtKB-UniRule"/>
</dbReference>
<dbReference type="GO" id="GO:0043335">
    <property type="term" value="P:protein unfolding"/>
    <property type="evidence" value="ECO:0007669"/>
    <property type="project" value="UniProtKB-UniRule"/>
</dbReference>
<dbReference type="GO" id="GO:0051603">
    <property type="term" value="P:proteolysis involved in protein catabolic process"/>
    <property type="evidence" value="ECO:0007669"/>
    <property type="project" value="TreeGrafter"/>
</dbReference>
<dbReference type="CDD" id="cd19498">
    <property type="entry name" value="RecA-like_HslU"/>
    <property type="match status" value="1"/>
</dbReference>
<dbReference type="FunFam" id="1.10.8.10:FF:000028">
    <property type="entry name" value="ATP-dependent protease ATPase subunit HslU"/>
    <property type="match status" value="1"/>
</dbReference>
<dbReference type="FunFam" id="3.40.50.300:FF:000213">
    <property type="entry name" value="ATP-dependent protease ATPase subunit HslU"/>
    <property type="match status" value="1"/>
</dbReference>
<dbReference type="FunFam" id="3.40.50.300:FF:000220">
    <property type="entry name" value="ATP-dependent protease ATPase subunit HslU"/>
    <property type="match status" value="1"/>
</dbReference>
<dbReference type="Gene3D" id="1.10.8.60">
    <property type="match status" value="1"/>
</dbReference>
<dbReference type="Gene3D" id="1.10.8.10">
    <property type="entry name" value="DNA helicase RuvA subunit, C-terminal domain"/>
    <property type="match status" value="1"/>
</dbReference>
<dbReference type="Gene3D" id="3.40.50.300">
    <property type="entry name" value="P-loop containing nucleotide triphosphate hydrolases"/>
    <property type="match status" value="2"/>
</dbReference>
<dbReference type="HAMAP" id="MF_00249">
    <property type="entry name" value="HslU"/>
    <property type="match status" value="1"/>
</dbReference>
<dbReference type="InterPro" id="IPR003593">
    <property type="entry name" value="AAA+_ATPase"/>
</dbReference>
<dbReference type="InterPro" id="IPR050052">
    <property type="entry name" value="ATP-dep_Clp_protease_ClpX"/>
</dbReference>
<dbReference type="InterPro" id="IPR003959">
    <property type="entry name" value="ATPase_AAA_core"/>
</dbReference>
<dbReference type="InterPro" id="IPR019489">
    <property type="entry name" value="Clp_ATPase_C"/>
</dbReference>
<dbReference type="InterPro" id="IPR004491">
    <property type="entry name" value="HslU"/>
</dbReference>
<dbReference type="InterPro" id="IPR027417">
    <property type="entry name" value="P-loop_NTPase"/>
</dbReference>
<dbReference type="NCBIfam" id="TIGR00390">
    <property type="entry name" value="hslU"/>
    <property type="match status" value="1"/>
</dbReference>
<dbReference type="NCBIfam" id="NF003544">
    <property type="entry name" value="PRK05201.1"/>
    <property type="match status" value="1"/>
</dbReference>
<dbReference type="PANTHER" id="PTHR48102">
    <property type="entry name" value="ATP-DEPENDENT CLP PROTEASE ATP-BINDING SUBUNIT CLPX-LIKE, MITOCHONDRIAL-RELATED"/>
    <property type="match status" value="1"/>
</dbReference>
<dbReference type="PANTHER" id="PTHR48102:SF3">
    <property type="entry name" value="ATP-DEPENDENT PROTEASE ATPASE SUBUNIT HSLU"/>
    <property type="match status" value="1"/>
</dbReference>
<dbReference type="Pfam" id="PF00004">
    <property type="entry name" value="AAA"/>
    <property type="match status" value="1"/>
</dbReference>
<dbReference type="Pfam" id="PF07724">
    <property type="entry name" value="AAA_2"/>
    <property type="match status" value="1"/>
</dbReference>
<dbReference type="SMART" id="SM00382">
    <property type="entry name" value="AAA"/>
    <property type="match status" value="1"/>
</dbReference>
<dbReference type="SMART" id="SM01086">
    <property type="entry name" value="ClpB_D2-small"/>
    <property type="match status" value="1"/>
</dbReference>
<dbReference type="SUPFAM" id="SSF52540">
    <property type="entry name" value="P-loop containing nucleoside triphosphate hydrolases"/>
    <property type="match status" value="1"/>
</dbReference>
<comment type="function">
    <text evidence="1">ATPase subunit of a proteasome-like degradation complex; this subunit has chaperone activity. The binding of ATP and its subsequent hydrolysis by HslU are essential for unfolding of protein substrates subsequently hydrolyzed by HslV. HslU recognizes the N-terminal part of its protein substrates and unfolds these before they are guided to HslV for hydrolysis.</text>
</comment>
<comment type="subunit">
    <text evidence="1">A double ring-shaped homohexamer of HslV is capped on each side by a ring-shaped HslU homohexamer. The assembly of the HslU/HslV complex is dependent on binding of ATP.</text>
</comment>
<comment type="subcellular location">
    <subcellularLocation>
        <location evidence="1">Cytoplasm</location>
    </subcellularLocation>
</comment>
<comment type="similarity">
    <text evidence="1">Belongs to the ClpX chaperone family. HslU subfamily.</text>
</comment>
<sequence length="447" mass="50149">MSMTPREIVHELNRHIIGQDDAKRAVAIALRNRWRRMQLPAELRAEVTPKNILMIGPTGVGKTEIARRLAKLANAPFIKVEATKFTEVGYVGRDVESIIRDLADAALKMLREQEIVRVRHRAEDAAEDRILDALLPQARVSSFSEEAQQSSGDSNTRQLFRKRLREGQLDDKEIEIEVAESMGVDIAAPPGMEEMTNQLQSLFANMGKGKRKSRKLKVKEALKMVRDEEAGRLVNEEELKAKALEAVEQHGIVFIDEIDKVAKRGNVGGADVSREGVQRDLLPLIEGCTVNTKLGMVKTDHILFIASGAFHLSKPSDLVPELQGRLPIRVELKALTPEDFERILKEPHASLTEQYRELLKTEGLHIEFADEGLKRLAEIAFQVNEKTENIGARRLHTLLERLLEEVSFSAGDLASTHDETPIHIDAAYVNSHLGELAQNEDLSRYIL</sequence>
<proteinExistence type="inferred from homology"/>
<reference key="1">
    <citation type="journal article" date="2006" name="Nat. Biotechnol.">
        <title>Complete genome sequence of the entomopathogenic and metabolically versatile soil bacterium Pseudomonas entomophila.</title>
        <authorList>
            <person name="Vodovar N."/>
            <person name="Vallenet D."/>
            <person name="Cruveiller S."/>
            <person name="Rouy Z."/>
            <person name="Barbe V."/>
            <person name="Acosta C."/>
            <person name="Cattolico L."/>
            <person name="Jubin C."/>
            <person name="Lajus A."/>
            <person name="Segurens B."/>
            <person name="Vacherie B."/>
            <person name="Wincker P."/>
            <person name="Weissenbach J."/>
            <person name="Lemaitre B."/>
            <person name="Medigue C."/>
            <person name="Boccard F."/>
        </authorList>
    </citation>
    <scope>NUCLEOTIDE SEQUENCE [LARGE SCALE GENOMIC DNA]</scope>
    <source>
        <strain>L48</strain>
    </source>
</reference>
<accession>Q1I3T9</accession>
<feature type="chain" id="PRO_1000012773" description="ATP-dependent protease ATPase subunit HslU">
    <location>
        <begin position="1"/>
        <end position="447"/>
    </location>
</feature>
<feature type="binding site" evidence="1">
    <location>
        <position position="17"/>
    </location>
    <ligand>
        <name>ATP</name>
        <dbReference type="ChEBI" id="CHEBI:30616"/>
    </ligand>
</feature>
<feature type="binding site" evidence="1">
    <location>
        <begin position="59"/>
        <end position="64"/>
    </location>
    <ligand>
        <name>ATP</name>
        <dbReference type="ChEBI" id="CHEBI:30616"/>
    </ligand>
</feature>
<feature type="binding site" evidence="1">
    <location>
        <position position="256"/>
    </location>
    <ligand>
        <name>ATP</name>
        <dbReference type="ChEBI" id="CHEBI:30616"/>
    </ligand>
</feature>
<feature type="binding site" evidence="1">
    <location>
        <position position="321"/>
    </location>
    <ligand>
        <name>ATP</name>
        <dbReference type="ChEBI" id="CHEBI:30616"/>
    </ligand>
</feature>
<feature type="binding site" evidence="1">
    <location>
        <position position="393"/>
    </location>
    <ligand>
        <name>ATP</name>
        <dbReference type="ChEBI" id="CHEBI:30616"/>
    </ligand>
</feature>
<keyword id="KW-0067">ATP-binding</keyword>
<keyword id="KW-0143">Chaperone</keyword>
<keyword id="KW-0963">Cytoplasm</keyword>
<keyword id="KW-0547">Nucleotide-binding</keyword>
<gene>
    <name evidence="1" type="primary">hslU</name>
    <name type="ordered locus">PSEEN5064</name>
</gene>
<organism>
    <name type="scientific">Pseudomonas entomophila (strain L48)</name>
    <dbReference type="NCBI Taxonomy" id="384676"/>
    <lineage>
        <taxon>Bacteria</taxon>
        <taxon>Pseudomonadati</taxon>
        <taxon>Pseudomonadota</taxon>
        <taxon>Gammaproteobacteria</taxon>
        <taxon>Pseudomonadales</taxon>
        <taxon>Pseudomonadaceae</taxon>
        <taxon>Pseudomonas</taxon>
    </lineage>
</organism>
<name>HSLU_PSEE4</name>
<protein>
    <recommendedName>
        <fullName evidence="1">ATP-dependent protease ATPase subunit HslU</fullName>
    </recommendedName>
    <alternativeName>
        <fullName evidence="1">Unfoldase HslU</fullName>
    </alternativeName>
</protein>